<comment type="function">
    <text evidence="1">Necessary for efficient RNA polymerase transcription elongation past template-encoded arresting sites. The arresting sites in DNA have the property of trapping a certain fraction of elongating RNA polymerases that pass through, resulting in locked ternary complexes. Cleavage of the nascent transcript by cleavage factors such as GreA or GreB allows the resumption of elongation from the new 3'terminus. GreA releases sequences of 2 to 3 nucleotides.</text>
</comment>
<comment type="similarity">
    <text evidence="1">Belongs to the GreA/GreB family.</text>
</comment>
<feature type="chain" id="PRO_1000034282" description="Transcription elongation factor GreA">
    <location>
        <begin position="1"/>
        <end position="164"/>
    </location>
</feature>
<feature type="coiled-coil region" evidence="1">
    <location>
        <begin position="50"/>
        <end position="76"/>
    </location>
</feature>
<reference key="1">
    <citation type="journal article" date="2008" name="PLoS ONE">
        <title>Genetic basis of virulence attenuation revealed by comparative genomic analysis of Mycobacterium tuberculosis strain H37Ra versus H37Rv.</title>
        <authorList>
            <person name="Zheng H."/>
            <person name="Lu L."/>
            <person name="Wang B."/>
            <person name="Pu S."/>
            <person name="Zhang X."/>
            <person name="Zhu G."/>
            <person name="Shi W."/>
            <person name="Zhang L."/>
            <person name="Wang H."/>
            <person name="Wang S."/>
            <person name="Zhao G."/>
            <person name="Zhang Y."/>
        </authorList>
    </citation>
    <scope>NUCLEOTIDE SEQUENCE [LARGE SCALE GENOMIC DNA]</scope>
    <source>
        <strain>ATCC 25177 / H37Ra</strain>
    </source>
</reference>
<evidence type="ECO:0000255" key="1">
    <source>
        <dbReference type="HAMAP-Rule" id="MF_00105"/>
    </source>
</evidence>
<sequence length="164" mass="17855">MTDTQVTWLTQESHDRLKAELDQLIANRPVIAAEINDRREEGDLRENGGYHAAREEQGQQEARIRQLQDLLSNAKVGEAPKQSGVALPGSVVKVYYNGDKSDSETFLIATRQEGVSDGKLEVYSPNSPLGGALIDAKVGETRSYTVPNGSTVSVTLVSAEPYHS</sequence>
<keyword id="KW-0175">Coiled coil</keyword>
<keyword id="KW-0238">DNA-binding</keyword>
<keyword id="KW-1185">Reference proteome</keyword>
<keyword id="KW-0804">Transcription</keyword>
<keyword id="KW-0805">Transcription regulation</keyword>
<protein>
    <recommendedName>
        <fullName evidence="1">Transcription elongation factor GreA</fullName>
    </recommendedName>
    <alternativeName>
        <fullName evidence="1">Transcript cleavage factor GreA</fullName>
    </alternativeName>
</protein>
<organism>
    <name type="scientific">Mycobacterium tuberculosis (strain ATCC 25177 / H37Ra)</name>
    <dbReference type="NCBI Taxonomy" id="419947"/>
    <lineage>
        <taxon>Bacteria</taxon>
        <taxon>Bacillati</taxon>
        <taxon>Actinomycetota</taxon>
        <taxon>Actinomycetes</taxon>
        <taxon>Mycobacteriales</taxon>
        <taxon>Mycobacteriaceae</taxon>
        <taxon>Mycobacterium</taxon>
        <taxon>Mycobacterium tuberculosis complex</taxon>
    </lineage>
</organism>
<proteinExistence type="inferred from homology"/>
<gene>
    <name evidence="1" type="primary">greA</name>
    <name type="ordered locus">MRA_1090</name>
</gene>
<name>GREA_MYCTA</name>
<dbReference type="EMBL" id="CP000611">
    <property type="protein sequence ID" value="ABQ72826.1"/>
    <property type="molecule type" value="Genomic_DNA"/>
</dbReference>
<dbReference type="RefSeq" id="WP_003405742.1">
    <property type="nucleotide sequence ID" value="NZ_CP016972.1"/>
</dbReference>
<dbReference type="SMR" id="A5U1C6"/>
<dbReference type="GeneID" id="45425053"/>
<dbReference type="KEGG" id="mra:MRA_1090"/>
<dbReference type="eggNOG" id="COG0782">
    <property type="taxonomic scope" value="Bacteria"/>
</dbReference>
<dbReference type="HOGENOM" id="CLU_101379_0_0_11"/>
<dbReference type="Proteomes" id="UP000001988">
    <property type="component" value="Chromosome"/>
</dbReference>
<dbReference type="GO" id="GO:0003677">
    <property type="term" value="F:DNA binding"/>
    <property type="evidence" value="ECO:0007669"/>
    <property type="project" value="UniProtKB-UniRule"/>
</dbReference>
<dbReference type="GO" id="GO:0070063">
    <property type="term" value="F:RNA polymerase binding"/>
    <property type="evidence" value="ECO:0007669"/>
    <property type="project" value="InterPro"/>
</dbReference>
<dbReference type="GO" id="GO:0006354">
    <property type="term" value="P:DNA-templated transcription elongation"/>
    <property type="evidence" value="ECO:0007669"/>
    <property type="project" value="TreeGrafter"/>
</dbReference>
<dbReference type="GO" id="GO:0032784">
    <property type="term" value="P:regulation of DNA-templated transcription elongation"/>
    <property type="evidence" value="ECO:0007669"/>
    <property type="project" value="UniProtKB-UniRule"/>
</dbReference>
<dbReference type="FunFam" id="1.10.287.180:FF:000001">
    <property type="entry name" value="Transcription elongation factor GreA"/>
    <property type="match status" value="1"/>
</dbReference>
<dbReference type="FunFam" id="3.10.50.30:FF:000003">
    <property type="entry name" value="Transcription elongation factor GreA"/>
    <property type="match status" value="1"/>
</dbReference>
<dbReference type="Gene3D" id="3.10.50.30">
    <property type="entry name" value="Transcription elongation factor, GreA/GreB, C-terminal domain"/>
    <property type="match status" value="1"/>
</dbReference>
<dbReference type="Gene3D" id="1.10.287.180">
    <property type="entry name" value="Transcription elongation factor, GreA/GreB, N-terminal domain"/>
    <property type="match status" value="1"/>
</dbReference>
<dbReference type="HAMAP" id="MF_00105">
    <property type="entry name" value="GreA_GreB"/>
    <property type="match status" value="1"/>
</dbReference>
<dbReference type="InterPro" id="IPR036953">
    <property type="entry name" value="GreA/GreB_C_sf"/>
</dbReference>
<dbReference type="InterPro" id="IPR018151">
    <property type="entry name" value="TF_GreA/GreB_CS"/>
</dbReference>
<dbReference type="InterPro" id="IPR006359">
    <property type="entry name" value="Tscrpt_elong_fac_GreA"/>
</dbReference>
<dbReference type="InterPro" id="IPR028624">
    <property type="entry name" value="Tscrpt_elong_fac_GreA/B"/>
</dbReference>
<dbReference type="InterPro" id="IPR001437">
    <property type="entry name" value="Tscrpt_elong_fac_GreA/B_C"/>
</dbReference>
<dbReference type="InterPro" id="IPR023459">
    <property type="entry name" value="Tscrpt_elong_fac_GreA/B_fam"/>
</dbReference>
<dbReference type="InterPro" id="IPR022691">
    <property type="entry name" value="Tscrpt_elong_fac_GreA/B_N"/>
</dbReference>
<dbReference type="InterPro" id="IPR036805">
    <property type="entry name" value="Tscrpt_elong_fac_GreA/B_N_sf"/>
</dbReference>
<dbReference type="NCBIfam" id="TIGR01462">
    <property type="entry name" value="greA"/>
    <property type="match status" value="1"/>
</dbReference>
<dbReference type="NCBIfam" id="NF001262">
    <property type="entry name" value="PRK00226.1-3"/>
    <property type="match status" value="1"/>
</dbReference>
<dbReference type="PANTHER" id="PTHR30437">
    <property type="entry name" value="TRANSCRIPTION ELONGATION FACTOR GREA"/>
    <property type="match status" value="1"/>
</dbReference>
<dbReference type="PANTHER" id="PTHR30437:SF4">
    <property type="entry name" value="TRANSCRIPTION ELONGATION FACTOR GREA"/>
    <property type="match status" value="1"/>
</dbReference>
<dbReference type="Pfam" id="PF01272">
    <property type="entry name" value="GreA_GreB"/>
    <property type="match status" value="1"/>
</dbReference>
<dbReference type="Pfam" id="PF03449">
    <property type="entry name" value="GreA_GreB_N"/>
    <property type="match status" value="1"/>
</dbReference>
<dbReference type="PIRSF" id="PIRSF006092">
    <property type="entry name" value="GreA_GreB"/>
    <property type="match status" value="1"/>
</dbReference>
<dbReference type="SUPFAM" id="SSF54534">
    <property type="entry name" value="FKBP-like"/>
    <property type="match status" value="1"/>
</dbReference>
<dbReference type="SUPFAM" id="SSF46557">
    <property type="entry name" value="GreA transcript cleavage protein, N-terminal domain"/>
    <property type="match status" value="1"/>
</dbReference>
<dbReference type="PROSITE" id="PS00829">
    <property type="entry name" value="GREAB_1"/>
    <property type="match status" value="1"/>
</dbReference>
<dbReference type="PROSITE" id="PS00830">
    <property type="entry name" value="GREAB_2"/>
    <property type="match status" value="1"/>
</dbReference>
<accession>A5U1C6</accession>